<dbReference type="EMBL" id="BA000003">
    <property type="protein sequence ID" value="BAB13127.1"/>
    <property type="molecule type" value="Genomic_DNA"/>
</dbReference>
<dbReference type="RefSeq" id="NP_240241.1">
    <property type="nucleotide sequence ID" value="NC_002528.1"/>
</dbReference>
<dbReference type="RefSeq" id="WP_010896112.1">
    <property type="nucleotide sequence ID" value="NC_002528.1"/>
</dbReference>
<dbReference type="SMR" id="P57504"/>
<dbReference type="STRING" id="563178.BUAP5A_422"/>
<dbReference type="EnsemblBacteria" id="BAB13127">
    <property type="protein sequence ID" value="BAB13127"/>
    <property type="gene ID" value="BAB13127"/>
</dbReference>
<dbReference type="KEGG" id="buc:BU429"/>
<dbReference type="PATRIC" id="fig|107806.10.peg.438"/>
<dbReference type="eggNOG" id="COG0249">
    <property type="taxonomic scope" value="Bacteria"/>
</dbReference>
<dbReference type="HOGENOM" id="CLU_002472_4_0_6"/>
<dbReference type="Proteomes" id="UP000001806">
    <property type="component" value="Chromosome"/>
</dbReference>
<dbReference type="GO" id="GO:0005829">
    <property type="term" value="C:cytosol"/>
    <property type="evidence" value="ECO:0007669"/>
    <property type="project" value="TreeGrafter"/>
</dbReference>
<dbReference type="GO" id="GO:0005524">
    <property type="term" value="F:ATP binding"/>
    <property type="evidence" value="ECO:0007669"/>
    <property type="project" value="UniProtKB-UniRule"/>
</dbReference>
<dbReference type="GO" id="GO:0140664">
    <property type="term" value="F:ATP-dependent DNA damage sensor activity"/>
    <property type="evidence" value="ECO:0007669"/>
    <property type="project" value="InterPro"/>
</dbReference>
<dbReference type="GO" id="GO:0003684">
    <property type="term" value="F:damaged DNA binding"/>
    <property type="evidence" value="ECO:0007669"/>
    <property type="project" value="UniProtKB-UniRule"/>
</dbReference>
<dbReference type="GO" id="GO:0030983">
    <property type="term" value="F:mismatched DNA binding"/>
    <property type="evidence" value="ECO:0007669"/>
    <property type="project" value="InterPro"/>
</dbReference>
<dbReference type="GO" id="GO:0006298">
    <property type="term" value="P:mismatch repair"/>
    <property type="evidence" value="ECO:0007669"/>
    <property type="project" value="UniProtKB-UniRule"/>
</dbReference>
<dbReference type="FunFam" id="1.10.1420.10:FF:000001">
    <property type="entry name" value="DNA mismatch repair protein MutS"/>
    <property type="match status" value="1"/>
</dbReference>
<dbReference type="FunFam" id="3.40.1170.10:FF:000001">
    <property type="entry name" value="DNA mismatch repair protein MutS"/>
    <property type="match status" value="1"/>
</dbReference>
<dbReference type="FunFam" id="3.40.50.300:FF:000870">
    <property type="entry name" value="MutS protein homolog 4"/>
    <property type="match status" value="1"/>
</dbReference>
<dbReference type="Gene3D" id="1.10.1420.10">
    <property type="match status" value="2"/>
</dbReference>
<dbReference type="Gene3D" id="3.40.1170.10">
    <property type="entry name" value="DNA repair protein MutS, domain I"/>
    <property type="match status" value="1"/>
</dbReference>
<dbReference type="Gene3D" id="3.30.420.110">
    <property type="entry name" value="MutS, connector domain"/>
    <property type="match status" value="1"/>
</dbReference>
<dbReference type="Gene3D" id="3.40.50.300">
    <property type="entry name" value="P-loop containing nucleotide triphosphate hydrolases"/>
    <property type="match status" value="1"/>
</dbReference>
<dbReference type="HAMAP" id="MF_00096">
    <property type="entry name" value="MutS"/>
    <property type="match status" value="1"/>
</dbReference>
<dbReference type="InterPro" id="IPR005748">
    <property type="entry name" value="DNA_mismatch_repair_MutS"/>
</dbReference>
<dbReference type="InterPro" id="IPR007695">
    <property type="entry name" value="DNA_mismatch_repair_MutS-lik_N"/>
</dbReference>
<dbReference type="InterPro" id="IPR017261">
    <property type="entry name" value="DNA_mismatch_repair_MutS/MSH"/>
</dbReference>
<dbReference type="InterPro" id="IPR000432">
    <property type="entry name" value="DNA_mismatch_repair_MutS_C"/>
</dbReference>
<dbReference type="InterPro" id="IPR007861">
    <property type="entry name" value="DNA_mismatch_repair_MutS_clamp"/>
</dbReference>
<dbReference type="InterPro" id="IPR007696">
    <property type="entry name" value="DNA_mismatch_repair_MutS_core"/>
</dbReference>
<dbReference type="InterPro" id="IPR016151">
    <property type="entry name" value="DNA_mismatch_repair_MutS_N"/>
</dbReference>
<dbReference type="InterPro" id="IPR036187">
    <property type="entry name" value="DNA_mismatch_repair_MutS_sf"/>
</dbReference>
<dbReference type="InterPro" id="IPR007860">
    <property type="entry name" value="DNA_mmatch_repair_MutS_con_dom"/>
</dbReference>
<dbReference type="InterPro" id="IPR045076">
    <property type="entry name" value="MutS"/>
</dbReference>
<dbReference type="InterPro" id="IPR036678">
    <property type="entry name" value="MutS_con_dom_sf"/>
</dbReference>
<dbReference type="InterPro" id="IPR027417">
    <property type="entry name" value="P-loop_NTPase"/>
</dbReference>
<dbReference type="NCBIfam" id="TIGR01070">
    <property type="entry name" value="mutS1"/>
    <property type="match status" value="1"/>
</dbReference>
<dbReference type="NCBIfam" id="NF003810">
    <property type="entry name" value="PRK05399.1"/>
    <property type="match status" value="1"/>
</dbReference>
<dbReference type="PANTHER" id="PTHR11361:SF34">
    <property type="entry name" value="DNA MISMATCH REPAIR PROTEIN MSH1, MITOCHONDRIAL"/>
    <property type="match status" value="1"/>
</dbReference>
<dbReference type="PANTHER" id="PTHR11361">
    <property type="entry name" value="DNA MISMATCH REPAIR PROTEIN MUTS FAMILY MEMBER"/>
    <property type="match status" value="1"/>
</dbReference>
<dbReference type="Pfam" id="PF01624">
    <property type="entry name" value="MutS_I"/>
    <property type="match status" value="1"/>
</dbReference>
<dbReference type="Pfam" id="PF05188">
    <property type="entry name" value="MutS_II"/>
    <property type="match status" value="1"/>
</dbReference>
<dbReference type="Pfam" id="PF05192">
    <property type="entry name" value="MutS_III"/>
    <property type="match status" value="1"/>
</dbReference>
<dbReference type="Pfam" id="PF05190">
    <property type="entry name" value="MutS_IV"/>
    <property type="match status" value="1"/>
</dbReference>
<dbReference type="Pfam" id="PF00488">
    <property type="entry name" value="MutS_V"/>
    <property type="match status" value="1"/>
</dbReference>
<dbReference type="PIRSF" id="PIRSF037677">
    <property type="entry name" value="DNA_mis_repair_Msh6"/>
    <property type="match status" value="1"/>
</dbReference>
<dbReference type="SMART" id="SM00534">
    <property type="entry name" value="MUTSac"/>
    <property type="match status" value="1"/>
</dbReference>
<dbReference type="SMART" id="SM00533">
    <property type="entry name" value="MUTSd"/>
    <property type="match status" value="1"/>
</dbReference>
<dbReference type="SUPFAM" id="SSF55271">
    <property type="entry name" value="DNA repair protein MutS, domain I"/>
    <property type="match status" value="1"/>
</dbReference>
<dbReference type="SUPFAM" id="SSF53150">
    <property type="entry name" value="DNA repair protein MutS, domain II"/>
    <property type="match status" value="1"/>
</dbReference>
<dbReference type="SUPFAM" id="SSF48334">
    <property type="entry name" value="DNA repair protein MutS, domain III"/>
    <property type="match status" value="1"/>
</dbReference>
<dbReference type="SUPFAM" id="SSF52540">
    <property type="entry name" value="P-loop containing nucleoside triphosphate hydrolases"/>
    <property type="match status" value="1"/>
</dbReference>
<dbReference type="PROSITE" id="PS00486">
    <property type="entry name" value="DNA_MISMATCH_REPAIR_2"/>
    <property type="match status" value="1"/>
</dbReference>
<reference key="1">
    <citation type="journal article" date="2000" name="Nature">
        <title>Genome sequence of the endocellular bacterial symbiont of aphids Buchnera sp. APS.</title>
        <authorList>
            <person name="Shigenobu S."/>
            <person name="Watanabe H."/>
            <person name="Hattori M."/>
            <person name="Sakaki Y."/>
            <person name="Ishikawa H."/>
        </authorList>
    </citation>
    <scope>NUCLEOTIDE SEQUENCE [LARGE SCALE GENOMIC DNA]</scope>
    <source>
        <strain>APS</strain>
    </source>
</reference>
<comment type="function">
    <text evidence="1">This protein is involved in the repair of mismatches in DNA. It is possible that it carries out the mismatch recognition step. This protein has a weak ATPase activity (By similarity).</text>
</comment>
<comment type="similarity">
    <text evidence="3">Belongs to the DNA mismatch repair MutS family.</text>
</comment>
<protein>
    <recommendedName>
        <fullName>DNA mismatch repair protein MutS</fullName>
    </recommendedName>
</protein>
<gene>
    <name type="primary">mutS</name>
    <name type="ordered locus">BU429</name>
</gene>
<proteinExistence type="inferred from homology"/>
<name>MUTS_BUCAI</name>
<sequence>MKKKNIKNSMNNHTPMIKQYLSLKSQYPDMLLFYQMGDFYELFYEDAERISELLKITLTKKGYSNHKIIPMAGVPCHKSEYYLSKLVKLGESIAICDQQKETDCKKKLISRKVVRIITPGTVTDEVLLEENEDNFIAAIWKENNQFGYSVLDLSLGFFGVSKIFSSCDLLSEIERTNPKEILYPENFSDVFLIESRKCIRKRSLLEFDLETSYKLLNLQYNTCSLDGFGIEKNNFVIRAAGCLLQYVKSMNMTLLPNIRQLKYNYMEDSIFMNFSTRKSLEITQNISGEKKNTLSAILNKTVTSMGSRMLNRWLNSPLKNFKIVRNRHESVEALQFFYKELQFILRQVNDLERIYSRLALRTASPHDFVRMRSTLEILPNLHLILKKIKSKHIKKIRLSIGYFEEVLCLLKKAISLKPSKCIRDGGVIAELYNIELDELRSIKINSKEYIKNFEQKEKKKLMIESFKIKFNKIIGYYIQISKRHTHLIPKYYVIIQTLKNTERYSVPLLKEYEEKVLNSEMRSLLLEKKLYAEIFNIIEPFLEKLQNSALALSELDVLVNLSERAISLNYTRPIMSEKYGISLLESRHPVVECFLKTPFIKNSVFLSRTQRMIIITGPNMGGKSTYMRQIALIVIMAGIGSFVPARYALIGSIDKIFTRIGSADDLSNGYSTFMMEMMEISNILHNATSNSLVLIDELGRGTSTNEGLSLAWSCSRYLININKSMTLLSTHFVELTKLEEKEKFVKNFHFSAIKSDLHIAFLYKIKNGISKKSYGISVASLSGLPDSVLEDAEKKLIEIENT</sequence>
<accession>P57504</accession>
<keyword id="KW-0067">ATP-binding</keyword>
<keyword id="KW-0227">DNA damage</keyword>
<keyword id="KW-0234">DNA repair</keyword>
<keyword id="KW-0238">DNA-binding</keyword>
<keyword id="KW-0547">Nucleotide-binding</keyword>
<keyword id="KW-1185">Reference proteome</keyword>
<evidence type="ECO:0000250" key="1"/>
<evidence type="ECO:0000255" key="2"/>
<evidence type="ECO:0000305" key="3"/>
<feature type="chain" id="PRO_0000115079" description="DNA mismatch repair protein MutS">
    <location>
        <begin position="1"/>
        <end position="802"/>
    </location>
</feature>
<feature type="binding site" evidence="2">
    <location>
        <begin position="617"/>
        <end position="624"/>
    </location>
    <ligand>
        <name>ATP</name>
        <dbReference type="ChEBI" id="CHEBI:30616"/>
    </ligand>
</feature>
<organism>
    <name type="scientific">Buchnera aphidicola subsp. Acyrthosiphon pisum (strain APS)</name>
    <name type="common">Acyrthosiphon pisum symbiotic bacterium</name>
    <dbReference type="NCBI Taxonomy" id="107806"/>
    <lineage>
        <taxon>Bacteria</taxon>
        <taxon>Pseudomonadati</taxon>
        <taxon>Pseudomonadota</taxon>
        <taxon>Gammaproteobacteria</taxon>
        <taxon>Enterobacterales</taxon>
        <taxon>Erwiniaceae</taxon>
        <taxon>Buchnera</taxon>
    </lineage>
</organism>